<accession>P48131</accession>
<gene>
    <name type="primary">rpl36</name>
</gene>
<geneLocation type="cyanelle"/>
<reference key="1">
    <citation type="journal article" date="1995" name="Plant Mol. Biol. Rep.">
        <title>Nucleotide sequence of the cyanelle DNA from Cyanophora paradoxa.</title>
        <authorList>
            <person name="Stirewalt V.L."/>
            <person name="Michalowski C.B."/>
            <person name="Loeffelhardt W."/>
            <person name="Bohnert H.J."/>
            <person name="Bryant D.A."/>
        </authorList>
    </citation>
    <scope>NUCLEOTIDE SEQUENCE [LARGE SCALE GENOMIC DNA]</scope>
    <source>
        <strain>UTEX LB 555 / Pringsheim</strain>
    </source>
</reference>
<reference key="2">
    <citation type="book" date="1997" name="Eukaryotism and symbiosis">
        <title>The complete sequence of the cyanelle genome of Cyanophora paradoxa: the genetic complexity of a primitive plastid.</title>
        <editorList>
            <person name="Schenk H.E.A."/>
            <person name="Herrmann R."/>
            <person name="Jeon K.W."/>
            <person name="Mueller N.E."/>
            <person name="Schwemmler W."/>
        </editorList>
        <authorList>
            <person name="Loeffelhardt W."/>
            <person name="Stirewalt V.L."/>
            <person name="Michalowski C.B."/>
            <person name="Annarella M."/>
            <person name="Farley J.Y."/>
            <person name="Schluchter W.M."/>
            <person name="Chung S."/>
            <person name="Newmann-Spallart C."/>
            <person name="Steiner J.M."/>
            <person name="Jakowitsch J."/>
            <person name="Bohnert H.J."/>
            <person name="Bryant D.A."/>
        </authorList>
    </citation>
    <scope>NUCLEOTIDE SEQUENCE [LARGE SCALE GENOMIC DNA]</scope>
    <source>
        <strain>UTEX LB 555 / Pringsheim</strain>
    </source>
</reference>
<dbReference type="EMBL" id="U30821">
    <property type="protein sequence ID" value="AAA81290.1"/>
    <property type="molecule type" value="Genomic_DNA"/>
</dbReference>
<dbReference type="PIR" id="T06947">
    <property type="entry name" value="T06947"/>
</dbReference>
<dbReference type="RefSeq" id="NP_043259.1">
    <property type="nucleotide sequence ID" value="NC_001675.1"/>
</dbReference>
<dbReference type="SMR" id="P48131"/>
<dbReference type="GeneID" id="801594"/>
<dbReference type="GO" id="GO:0009842">
    <property type="term" value="C:cyanelle"/>
    <property type="evidence" value="ECO:0007669"/>
    <property type="project" value="UniProtKB-SubCell"/>
</dbReference>
<dbReference type="GO" id="GO:1990904">
    <property type="term" value="C:ribonucleoprotein complex"/>
    <property type="evidence" value="ECO:0007669"/>
    <property type="project" value="UniProtKB-KW"/>
</dbReference>
<dbReference type="GO" id="GO:0005840">
    <property type="term" value="C:ribosome"/>
    <property type="evidence" value="ECO:0007669"/>
    <property type="project" value="UniProtKB-KW"/>
</dbReference>
<dbReference type="GO" id="GO:0003735">
    <property type="term" value="F:structural constituent of ribosome"/>
    <property type="evidence" value="ECO:0007669"/>
    <property type="project" value="InterPro"/>
</dbReference>
<dbReference type="GO" id="GO:0006412">
    <property type="term" value="P:translation"/>
    <property type="evidence" value="ECO:0007669"/>
    <property type="project" value="InterPro"/>
</dbReference>
<dbReference type="HAMAP" id="MF_00251">
    <property type="entry name" value="Ribosomal_bL36"/>
    <property type="match status" value="1"/>
</dbReference>
<dbReference type="InterPro" id="IPR000473">
    <property type="entry name" value="Ribosomal_bL36"/>
</dbReference>
<dbReference type="InterPro" id="IPR035977">
    <property type="entry name" value="Ribosomal_bL36_sp"/>
</dbReference>
<dbReference type="NCBIfam" id="TIGR01022">
    <property type="entry name" value="rpmJ_bact"/>
    <property type="match status" value="1"/>
</dbReference>
<dbReference type="PANTHER" id="PTHR42888">
    <property type="entry name" value="50S RIBOSOMAL PROTEIN L36, CHLOROPLASTIC"/>
    <property type="match status" value="1"/>
</dbReference>
<dbReference type="PANTHER" id="PTHR42888:SF1">
    <property type="entry name" value="LARGE RIBOSOMAL SUBUNIT PROTEIN BL36C"/>
    <property type="match status" value="1"/>
</dbReference>
<dbReference type="Pfam" id="PF00444">
    <property type="entry name" value="Ribosomal_L36"/>
    <property type="match status" value="1"/>
</dbReference>
<dbReference type="SUPFAM" id="SSF57840">
    <property type="entry name" value="Ribosomal protein L36"/>
    <property type="match status" value="1"/>
</dbReference>
<dbReference type="PROSITE" id="PS00828">
    <property type="entry name" value="RIBOSOMAL_L36"/>
    <property type="match status" value="1"/>
</dbReference>
<name>RK36_CYAPA</name>
<organism>
    <name type="scientific">Cyanophora paradoxa</name>
    <dbReference type="NCBI Taxonomy" id="2762"/>
    <lineage>
        <taxon>Eukaryota</taxon>
        <taxon>Glaucocystophyceae</taxon>
        <taxon>Cyanophoraceae</taxon>
        <taxon>Cyanophora</taxon>
    </lineage>
</organism>
<evidence type="ECO:0000305" key="1"/>
<keyword id="KW-0194">Cyanelle</keyword>
<keyword id="KW-0934">Plastid</keyword>
<keyword id="KW-0687">Ribonucleoprotein</keyword>
<keyword id="KW-0689">Ribosomal protein</keyword>
<protein>
    <recommendedName>
        <fullName evidence="1">Large ribosomal subunit protein bL36c</fullName>
    </recommendedName>
    <alternativeName>
        <fullName>50S ribosomal protein L36, cyanelle</fullName>
    </alternativeName>
</protein>
<sequence>MKVRASVRKMCEKCRTIRRKGRVMVICSNSKHKQRQG</sequence>
<proteinExistence type="inferred from homology"/>
<comment type="subcellular location">
    <subcellularLocation>
        <location>Plastid</location>
        <location>Cyanelle</location>
    </subcellularLocation>
</comment>
<comment type="similarity">
    <text evidence="1">Belongs to the bacterial ribosomal protein bL36 family.</text>
</comment>
<feature type="chain" id="PRO_0000126306" description="Large ribosomal subunit protein bL36c">
    <location>
        <begin position="1"/>
        <end position="37"/>
    </location>
</feature>